<gene>
    <name evidence="1" type="primary">psbK</name>
</gene>
<geneLocation type="chloroplast"/>
<comment type="function">
    <text evidence="1">One of the components of the core complex of photosystem II (PSII). PSII is a light-driven water:plastoquinone oxidoreductase that uses light energy to abstract electrons from H(2)O, generating O(2) and a proton gradient subsequently used for ATP formation. It consists of a core antenna complex that captures photons, and an electron transfer chain that converts photonic excitation into a charge separation.</text>
</comment>
<comment type="subunit">
    <text evidence="1">PSII is composed of 1 copy each of membrane proteins PsbA, PsbB, PsbC, PsbD, PsbE, PsbF, PsbH, PsbI, PsbJ, PsbK, PsbL, PsbM, PsbT, PsbX, PsbY, PsbZ, Psb30/Ycf12, at least 3 peripheral proteins of the oxygen-evolving complex and a large number of cofactors. It forms dimeric complexes.</text>
</comment>
<comment type="subcellular location">
    <subcellularLocation>
        <location evidence="1">Plastid</location>
        <location evidence="1">Chloroplast thylakoid membrane</location>
        <topology evidence="1">Single-pass membrane protein</topology>
    </subcellularLocation>
</comment>
<comment type="similarity">
    <text evidence="1">Belongs to the PsbK family.</text>
</comment>
<evidence type="ECO:0000255" key="1">
    <source>
        <dbReference type="HAMAP-Rule" id="MF_00441"/>
    </source>
</evidence>
<name>PSBK_COFAR</name>
<sequence length="61" mass="7045">MLNIFSLIWICLNSALYSSGFFFGKLPEAYAFLNPIIDFMPVIPVFFFLLAFVWQAAVSFR</sequence>
<accession>A0A318</accession>
<feature type="propeptide" id="PRO_0000276132" evidence="1">
    <location>
        <begin position="1"/>
        <end position="24"/>
    </location>
</feature>
<feature type="chain" id="PRO_0000276133" description="Photosystem II reaction center protein K" evidence="1">
    <location>
        <begin position="25"/>
        <end position="61"/>
    </location>
</feature>
<feature type="transmembrane region" description="Helical" evidence="1">
    <location>
        <begin position="36"/>
        <end position="56"/>
    </location>
</feature>
<organism>
    <name type="scientific">Coffea arabica</name>
    <name type="common">Arabian coffee</name>
    <dbReference type="NCBI Taxonomy" id="13443"/>
    <lineage>
        <taxon>Eukaryota</taxon>
        <taxon>Viridiplantae</taxon>
        <taxon>Streptophyta</taxon>
        <taxon>Embryophyta</taxon>
        <taxon>Tracheophyta</taxon>
        <taxon>Spermatophyta</taxon>
        <taxon>Magnoliopsida</taxon>
        <taxon>eudicotyledons</taxon>
        <taxon>Gunneridae</taxon>
        <taxon>Pentapetalae</taxon>
        <taxon>asterids</taxon>
        <taxon>lamiids</taxon>
        <taxon>Gentianales</taxon>
        <taxon>Rubiaceae</taxon>
        <taxon>Ixoroideae</taxon>
        <taxon>Gardenieae complex</taxon>
        <taxon>Bertiereae - Coffeeae clade</taxon>
        <taxon>Coffeeae</taxon>
        <taxon>Coffea</taxon>
    </lineage>
</organism>
<proteinExistence type="inferred from homology"/>
<reference key="1">
    <citation type="journal article" date="2007" name="Plant Biotechnol. J.">
        <title>The complete nucleotide sequence of the coffee (Coffea arabica L.) chloroplast genome: organization and implications for biotechnology and phylogenetic relationships amongst angiosperms.</title>
        <authorList>
            <person name="Samson N."/>
            <person name="Bausher M.G."/>
            <person name="Lee S.-B."/>
            <person name="Jansen R.K."/>
            <person name="Daniell H."/>
        </authorList>
    </citation>
    <scope>NUCLEOTIDE SEQUENCE [LARGE SCALE GENOMIC DNA]</scope>
</reference>
<dbReference type="EMBL" id="EF044213">
    <property type="protein sequence ID" value="ABJ89662.1"/>
    <property type="molecule type" value="Genomic_DNA"/>
</dbReference>
<dbReference type="RefSeq" id="YP_817465.1">
    <property type="nucleotide sequence ID" value="NC_008535.1"/>
</dbReference>
<dbReference type="SMR" id="A0A318"/>
<dbReference type="GeneID" id="4421806"/>
<dbReference type="OrthoDB" id="1673137at2759"/>
<dbReference type="Proteomes" id="UP000515148">
    <property type="component" value="Chloroplast Pltd"/>
</dbReference>
<dbReference type="GO" id="GO:0009535">
    <property type="term" value="C:chloroplast thylakoid membrane"/>
    <property type="evidence" value="ECO:0007669"/>
    <property type="project" value="UniProtKB-SubCell"/>
</dbReference>
<dbReference type="GO" id="GO:0009539">
    <property type="term" value="C:photosystem II reaction center"/>
    <property type="evidence" value="ECO:0007669"/>
    <property type="project" value="InterPro"/>
</dbReference>
<dbReference type="GO" id="GO:0015979">
    <property type="term" value="P:photosynthesis"/>
    <property type="evidence" value="ECO:0007669"/>
    <property type="project" value="UniProtKB-UniRule"/>
</dbReference>
<dbReference type="HAMAP" id="MF_00441">
    <property type="entry name" value="PSII_PsbK"/>
    <property type="match status" value="1"/>
</dbReference>
<dbReference type="InterPro" id="IPR003687">
    <property type="entry name" value="PSII_PsbK"/>
</dbReference>
<dbReference type="InterPro" id="IPR037270">
    <property type="entry name" value="PSII_PsbK_sf"/>
</dbReference>
<dbReference type="NCBIfam" id="NF002715">
    <property type="entry name" value="PRK02553.1"/>
    <property type="match status" value="1"/>
</dbReference>
<dbReference type="PANTHER" id="PTHR35325">
    <property type="match status" value="1"/>
</dbReference>
<dbReference type="PANTHER" id="PTHR35325:SF1">
    <property type="entry name" value="PHOTOSYSTEM II REACTION CENTER PROTEIN K"/>
    <property type="match status" value="1"/>
</dbReference>
<dbReference type="Pfam" id="PF02533">
    <property type="entry name" value="PsbK"/>
    <property type="match status" value="1"/>
</dbReference>
<dbReference type="SUPFAM" id="SSF161037">
    <property type="entry name" value="Photosystem II reaction center protein K, PsbK"/>
    <property type="match status" value="1"/>
</dbReference>
<protein>
    <recommendedName>
        <fullName evidence="1">Photosystem II reaction center protein K</fullName>
        <shortName evidence="1">PSII-K</shortName>
    </recommendedName>
</protein>
<keyword id="KW-0150">Chloroplast</keyword>
<keyword id="KW-0472">Membrane</keyword>
<keyword id="KW-0602">Photosynthesis</keyword>
<keyword id="KW-0604">Photosystem II</keyword>
<keyword id="KW-0934">Plastid</keyword>
<keyword id="KW-0674">Reaction center</keyword>
<keyword id="KW-1185">Reference proteome</keyword>
<keyword id="KW-0793">Thylakoid</keyword>
<keyword id="KW-0812">Transmembrane</keyword>
<keyword id="KW-1133">Transmembrane helix</keyword>